<name>RL1_COXBR</name>
<reference key="1">
    <citation type="submission" date="2007-11" db="EMBL/GenBank/DDBJ databases">
        <title>Genome sequencing of phylogenetically and phenotypically diverse Coxiella burnetii isolates.</title>
        <authorList>
            <person name="Seshadri R."/>
            <person name="Samuel J.E."/>
        </authorList>
    </citation>
    <scope>NUCLEOTIDE SEQUENCE [LARGE SCALE GENOMIC DNA]</scope>
    <source>
        <strain>RSA 331 / Henzerling II</strain>
    </source>
</reference>
<accession>A9NAL1</accession>
<gene>
    <name evidence="1" type="primary">rplA</name>
    <name type="ordered locus">COXBURSA331_A0324</name>
</gene>
<proteinExistence type="inferred from homology"/>
<sequence length="232" mass="24725">MAAKLTKKRKTLAEKVQRDKTYPLSEAIKLIKECAKAKFNESIDVAINLGIDSRKSDQAIRGATVLPHGSGRTVKVAVFAQGDNVEKAKAAGADIVGLDDLAERIQGGDIDFDVVIATPETMRVVGKLGQVLGPRGLMPNPKVGTVTTDVASAVKNAKQGQVRYRTDKNGIIHCTIGKVNFEEKALEENFLALLNDIKKAKPSAAKGTYLKKLTLSSTMGPGIAIDRTTVGA</sequence>
<feature type="chain" id="PRO_1000086281" description="Large ribosomal subunit protein uL1">
    <location>
        <begin position="1"/>
        <end position="232"/>
    </location>
</feature>
<dbReference type="EMBL" id="CP000890">
    <property type="protein sequence ID" value="ABX77484.1"/>
    <property type="molecule type" value="Genomic_DNA"/>
</dbReference>
<dbReference type="RefSeq" id="WP_010957445.1">
    <property type="nucleotide sequence ID" value="NC_010117.1"/>
</dbReference>
<dbReference type="SMR" id="A9NAL1"/>
<dbReference type="KEGG" id="cbs:COXBURSA331_A0324"/>
<dbReference type="HOGENOM" id="CLU_062853_0_0_6"/>
<dbReference type="GO" id="GO:0022625">
    <property type="term" value="C:cytosolic large ribosomal subunit"/>
    <property type="evidence" value="ECO:0007669"/>
    <property type="project" value="TreeGrafter"/>
</dbReference>
<dbReference type="GO" id="GO:0019843">
    <property type="term" value="F:rRNA binding"/>
    <property type="evidence" value="ECO:0007669"/>
    <property type="project" value="UniProtKB-UniRule"/>
</dbReference>
<dbReference type="GO" id="GO:0003735">
    <property type="term" value="F:structural constituent of ribosome"/>
    <property type="evidence" value="ECO:0007669"/>
    <property type="project" value="InterPro"/>
</dbReference>
<dbReference type="GO" id="GO:0000049">
    <property type="term" value="F:tRNA binding"/>
    <property type="evidence" value="ECO:0007669"/>
    <property type="project" value="UniProtKB-KW"/>
</dbReference>
<dbReference type="GO" id="GO:0006417">
    <property type="term" value="P:regulation of translation"/>
    <property type="evidence" value="ECO:0007669"/>
    <property type="project" value="UniProtKB-KW"/>
</dbReference>
<dbReference type="GO" id="GO:0006412">
    <property type="term" value="P:translation"/>
    <property type="evidence" value="ECO:0007669"/>
    <property type="project" value="UniProtKB-UniRule"/>
</dbReference>
<dbReference type="CDD" id="cd00403">
    <property type="entry name" value="Ribosomal_L1"/>
    <property type="match status" value="1"/>
</dbReference>
<dbReference type="FunFam" id="3.40.50.790:FF:000001">
    <property type="entry name" value="50S ribosomal protein L1"/>
    <property type="match status" value="1"/>
</dbReference>
<dbReference type="Gene3D" id="3.30.190.20">
    <property type="match status" value="1"/>
</dbReference>
<dbReference type="Gene3D" id="3.40.50.790">
    <property type="match status" value="1"/>
</dbReference>
<dbReference type="HAMAP" id="MF_01318_B">
    <property type="entry name" value="Ribosomal_uL1_B"/>
    <property type="match status" value="1"/>
</dbReference>
<dbReference type="InterPro" id="IPR005878">
    <property type="entry name" value="Ribosom_uL1_bac-type"/>
</dbReference>
<dbReference type="InterPro" id="IPR002143">
    <property type="entry name" value="Ribosomal_uL1"/>
</dbReference>
<dbReference type="InterPro" id="IPR023674">
    <property type="entry name" value="Ribosomal_uL1-like"/>
</dbReference>
<dbReference type="InterPro" id="IPR028364">
    <property type="entry name" value="Ribosomal_uL1/biogenesis"/>
</dbReference>
<dbReference type="InterPro" id="IPR016095">
    <property type="entry name" value="Ribosomal_uL1_3-a/b-sand"/>
</dbReference>
<dbReference type="InterPro" id="IPR023673">
    <property type="entry name" value="Ribosomal_uL1_CS"/>
</dbReference>
<dbReference type="NCBIfam" id="TIGR01169">
    <property type="entry name" value="rplA_bact"/>
    <property type="match status" value="1"/>
</dbReference>
<dbReference type="PANTHER" id="PTHR36427">
    <property type="entry name" value="54S RIBOSOMAL PROTEIN L1, MITOCHONDRIAL"/>
    <property type="match status" value="1"/>
</dbReference>
<dbReference type="PANTHER" id="PTHR36427:SF3">
    <property type="entry name" value="LARGE RIBOSOMAL SUBUNIT PROTEIN UL1M"/>
    <property type="match status" value="1"/>
</dbReference>
<dbReference type="Pfam" id="PF00687">
    <property type="entry name" value="Ribosomal_L1"/>
    <property type="match status" value="1"/>
</dbReference>
<dbReference type="PIRSF" id="PIRSF002155">
    <property type="entry name" value="Ribosomal_L1"/>
    <property type="match status" value="1"/>
</dbReference>
<dbReference type="SUPFAM" id="SSF56808">
    <property type="entry name" value="Ribosomal protein L1"/>
    <property type="match status" value="1"/>
</dbReference>
<dbReference type="PROSITE" id="PS01199">
    <property type="entry name" value="RIBOSOMAL_L1"/>
    <property type="match status" value="1"/>
</dbReference>
<organism>
    <name type="scientific">Coxiella burnetii (strain RSA 331 / Henzerling II)</name>
    <dbReference type="NCBI Taxonomy" id="360115"/>
    <lineage>
        <taxon>Bacteria</taxon>
        <taxon>Pseudomonadati</taxon>
        <taxon>Pseudomonadota</taxon>
        <taxon>Gammaproteobacteria</taxon>
        <taxon>Legionellales</taxon>
        <taxon>Coxiellaceae</taxon>
        <taxon>Coxiella</taxon>
    </lineage>
</organism>
<protein>
    <recommendedName>
        <fullName evidence="1">Large ribosomal subunit protein uL1</fullName>
    </recommendedName>
    <alternativeName>
        <fullName evidence="2">50S ribosomal protein L1</fullName>
    </alternativeName>
</protein>
<keyword id="KW-0678">Repressor</keyword>
<keyword id="KW-0687">Ribonucleoprotein</keyword>
<keyword id="KW-0689">Ribosomal protein</keyword>
<keyword id="KW-0694">RNA-binding</keyword>
<keyword id="KW-0699">rRNA-binding</keyword>
<keyword id="KW-0810">Translation regulation</keyword>
<keyword id="KW-0820">tRNA-binding</keyword>
<evidence type="ECO:0000255" key="1">
    <source>
        <dbReference type="HAMAP-Rule" id="MF_01318"/>
    </source>
</evidence>
<evidence type="ECO:0000305" key="2"/>
<comment type="function">
    <text evidence="1">Binds directly to 23S rRNA. The L1 stalk is quite mobile in the ribosome, and is involved in E site tRNA release.</text>
</comment>
<comment type="function">
    <text evidence="1">Protein L1 is also a translational repressor protein, it controls the translation of the L11 operon by binding to its mRNA.</text>
</comment>
<comment type="subunit">
    <text evidence="1">Part of the 50S ribosomal subunit.</text>
</comment>
<comment type="similarity">
    <text evidence="1">Belongs to the universal ribosomal protein uL1 family.</text>
</comment>